<protein>
    <recommendedName>
        <fullName evidence="1">Hypertrehalosaemic factor</fullName>
    </recommendedName>
    <alternativeName>
        <fullName evidence="4">Adipokinetic hormone 1</fullName>
        <shortName evidence="4">EubPo-AKH-1</shortName>
    </alternativeName>
    <alternativeName>
        <fullName evidence="1">Hypertrehalosaemic neuropeptide</fullName>
    </alternativeName>
</protein>
<evidence type="ECO:0000250" key="1">
    <source>
        <dbReference type="UniProtKB" id="P67790"/>
    </source>
</evidence>
<evidence type="ECO:0000255" key="2"/>
<evidence type="ECO:0000269" key="3">
    <source>
    </source>
</evidence>
<evidence type="ECO:0000303" key="4">
    <source>
    </source>
</evidence>
<evidence type="ECO:0000305" key="5"/>
<name>HTF_EUBPO</name>
<comment type="function">
    <text evidence="5">Hypertrehalosaemic factors are neuropeptides that elevate the level of trehalose in the hemolymph (trehalose is the major carbohydrate in the hemolymph of insects).</text>
</comment>
<comment type="subcellular location">
    <subcellularLocation>
        <location evidence="5">Secreted</location>
    </subcellularLocation>
</comment>
<comment type="similarity">
    <text evidence="2">Belongs to the AKH/HRTH/RPCH family.</text>
</comment>
<dbReference type="GO" id="GO:0005576">
    <property type="term" value="C:extracellular region"/>
    <property type="evidence" value="ECO:0007669"/>
    <property type="project" value="UniProtKB-SubCell"/>
</dbReference>
<dbReference type="GO" id="GO:0005179">
    <property type="term" value="F:hormone activity"/>
    <property type="evidence" value="ECO:0007669"/>
    <property type="project" value="UniProtKB-KW"/>
</dbReference>
<dbReference type="GO" id="GO:0007218">
    <property type="term" value="P:neuropeptide signaling pathway"/>
    <property type="evidence" value="ECO:0007669"/>
    <property type="project" value="UniProtKB-KW"/>
</dbReference>
<dbReference type="InterPro" id="IPR002047">
    <property type="entry name" value="Adipokinetic_hormone_CS"/>
</dbReference>
<dbReference type="PROSITE" id="PS00256">
    <property type="entry name" value="AKH"/>
    <property type="match status" value="1"/>
</dbReference>
<reference evidence="5" key="1">
    <citation type="journal article" date="2009" name="BMC Evol. Biol.">
        <title>A proteomic approach for studying insect phylogeny: CAPA peptides of ancient insect taxa (Dictyoptera, Blattoptera) as a test case.</title>
        <authorList>
            <person name="Roth S."/>
            <person name="Fromm B."/>
            <person name="Gaede G."/>
            <person name="Predel R."/>
        </authorList>
    </citation>
    <scope>PROTEIN SEQUENCE</scope>
    <scope>PYROGLUTAMATE FORMATION AT GLN-1</scope>
    <scope>AMIDATION AT THR-10</scope>
    <source>
        <tissue evidence="3">Corpora cardiaca</tissue>
    </source>
</reference>
<accession>P85624</accession>
<sequence>QVNFSPGWGT</sequence>
<organism>
    <name type="scientific">Eublaberus posticus</name>
    <name type="common">Golden cockroach</name>
    <dbReference type="NCBI Taxonomy" id="36951"/>
    <lineage>
        <taxon>Eukaryota</taxon>
        <taxon>Metazoa</taxon>
        <taxon>Ecdysozoa</taxon>
        <taxon>Arthropoda</taxon>
        <taxon>Hexapoda</taxon>
        <taxon>Insecta</taxon>
        <taxon>Pterygota</taxon>
        <taxon>Neoptera</taxon>
        <taxon>Polyneoptera</taxon>
        <taxon>Dictyoptera</taxon>
        <taxon>Blattodea</taxon>
        <taxon>Blaberoidea</taxon>
        <taxon>Blaberidae</taxon>
        <taxon>Blaberinae</taxon>
        <taxon>Eublaberus</taxon>
    </lineage>
</organism>
<proteinExistence type="evidence at protein level"/>
<keyword id="KW-0027">Amidation</keyword>
<keyword id="KW-0903">Direct protein sequencing</keyword>
<keyword id="KW-0372">Hormone</keyword>
<keyword id="KW-0527">Neuropeptide</keyword>
<keyword id="KW-0873">Pyrrolidone carboxylic acid</keyword>
<keyword id="KW-0964">Secreted</keyword>
<feature type="peptide" id="PRO_0000378647" description="Hypertrehalosaemic factor" evidence="3">
    <location>
        <begin position="1"/>
        <end position="10"/>
    </location>
</feature>
<feature type="modified residue" description="Pyrrolidone carboxylic acid" evidence="3">
    <location>
        <position position="1"/>
    </location>
</feature>
<feature type="modified residue" description="Threonine amide" evidence="3">
    <location>
        <position position="10"/>
    </location>
</feature>